<gene>
    <name type="ordered locus">Os10g0418000</name>
    <name type="ordered locus">LOC_Os10g28230</name>
    <name evidence="4" type="ORF">OsJ_31536</name>
    <name type="ORF">OSJNBa0061K21.20</name>
</gene>
<organism>
    <name type="scientific">Oryza sativa subsp. japonica</name>
    <name type="common">Rice</name>
    <dbReference type="NCBI Taxonomy" id="39947"/>
    <lineage>
        <taxon>Eukaryota</taxon>
        <taxon>Viridiplantae</taxon>
        <taxon>Streptophyta</taxon>
        <taxon>Embryophyta</taxon>
        <taxon>Tracheophyta</taxon>
        <taxon>Spermatophyta</taxon>
        <taxon>Magnoliopsida</taxon>
        <taxon>Liliopsida</taxon>
        <taxon>Poales</taxon>
        <taxon>Poaceae</taxon>
        <taxon>BOP clade</taxon>
        <taxon>Oryzoideae</taxon>
        <taxon>Oryzeae</taxon>
        <taxon>Oryzinae</taxon>
        <taxon>Oryza</taxon>
        <taxon>Oryza sativa</taxon>
    </lineage>
</organism>
<dbReference type="EMBL" id="AF193345">
    <property type="protein sequence ID" value="AAF07182.1"/>
    <property type="molecule type" value="mRNA"/>
</dbReference>
<dbReference type="EMBL" id="AC016780">
    <property type="protein sequence ID" value="AAM08789.1"/>
    <property type="molecule type" value="Genomic_DNA"/>
</dbReference>
<dbReference type="EMBL" id="DP000086">
    <property type="protein sequence ID" value="AAP53784.1"/>
    <property type="molecule type" value="Genomic_DNA"/>
</dbReference>
<dbReference type="EMBL" id="AP008216">
    <property type="protein sequence ID" value="BAF26525.1"/>
    <property type="molecule type" value="Genomic_DNA"/>
</dbReference>
<dbReference type="EMBL" id="AP014966">
    <property type="protein sequence ID" value="BAT10868.1"/>
    <property type="molecule type" value="Genomic_DNA"/>
</dbReference>
<dbReference type="EMBL" id="CM000147">
    <property type="protein sequence ID" value="EAZ16090.1"/>
    <property type="molecule type" value="Genomic_DNA"/>
</dbReference>
<dbReference type="EMBL" id="AK121515">
    <property type="protein sequence ID" value="BAH00529.1"/>
    <property type="molecule type" value="mRNA"/>
</dbReference>
<dbReference type="RefSeq" id="XP_015613173.1">
    <property type="nucleotide sequence ID" value="XM_015757687.1"/>
</dbReference>
<dbReference type="SMR" id="Q8S857"/>
<dbReference type="FunCoup" id="Q8S857">
    <property type="interactions" value="2372"/>
</dbReference>
<dbReference type="STRING" id="39947.Q8S857"/>
<dbReference type="PaxDb" id="39947-Q8S857"/>
<dbReference type="EnsemblPlants" id="Os10t0418000-01">
    <property type="protein sequence ID" value="Os10t0418000-01"/>
    <property type="gene ID" value="Os10g0418000"/>
</dbReference>
<dbReference type="Gramene" id="Os10t0418000-01">
    <property type="protein sequence ID" value="Os10t0418000-01"/>
    <property type="gene ID" value="Os10g0418000"/>
</dbReference>
<dbReference type="KEGG" id="dosa:Os10g0418000"/>
<dbReference type="eggNOG" id="KOG1757">
    <property type="taxonomic scope" value="Eukaryota"/>
</dbReference>
<dbReference type="HOGENOM" id="CLU_062828_2_2_1"/>
<dbReference type="InParanoid" id="Q8S857"/>
<dbReference type="OMA" id="NICQSGI"/>
<dbReference type="OrthoDB" id="9421954at2759"/>
<dbReference type="Proteomes" id="UP000000763">
    <property type="component" value="Chromosome 10"/>
</dbReference>
<dbReference type="Proteomes" id="UP000007752">
    <property type="component" value="Chromosome 10"/>
</dbReference>
<dbReference type="Proteomes" id="UP000059680">
    <property type="component" value="Chromosome 10"/>
</dbReference>
<dbReference type="GO" id="GO:0000786">
    <property type="term" value="C:nucleosome"/>
    <property type="evidence" value="ECO:0000318"/>
    <property type="project" value="GO_Central"/>
</dbReference>
<dbReference type="GO" id="GO:0005634">
    <property type="term" value="C:nucleus"/>
    <property type="evidence" value="ECO:0000318"/>
    <property type="project" value="GO_Central"/>
</dbReference>
<dbReference type="GO" id="GO:0003677">
    <property type="term" value="F:DNA binding"/>
    <property type="evidence" value="ECO:0007669"/>
    <property type="project" value="UniProtKB-KW"/>
</dbReference>
<dbReference type="GO" id="GO:0046982">
    <property type="term" value="F:protein heterodimerization activity"/>
    <property type="evidence" value="ECO:0007669"/>
    <property type="project" value="InterPro"/>
</dbReference>
<dbReference type="GO" id="GO:0030527">
    <property type="term" value="F:structural constituent of chromatin"/>
    <property type="evidence" value="ECO:0000318"/>
    <property type="project" value="GO_Central"/>
</dbReference>
<dbReference type="GO" id="GO:0031507">
    <property type="term" value="P:heterochromatin formation"/>
    <property type="evidence" value="ECO:0000318"/>
    <property type="project" value="GO_Central"/>
</dbReference>
<dbReference type="CDD" id="cd00074">
    <property type="entry name" value="HFD_H2A"/>
    <property type="match status" value="1"/>
</dbReference>
<dbReference type="FunFam" id="1.10.20.10:FF:000005">
    <property type="entry name" value="Histone H2A"/>
    <property type="match status" value="1"/>
</dbReference>
<dbReference type="Gene3D" id="1.10.20.10">
    <property type="entry name" value="Histone, subunit A"/>
    <property type="match status" value="1"/>
</dbReference>
<dbReference type="InterPro" id="IPR009072">
    <property type="entry name" value="Histone-fold"/>
</dbReference>
<dbReference type="InterPro" id="IPR002119">
    <property type="entry name" value="Histone_H2A"/>
</dbReference>
<dbReference type="InterPro" id="IPR007125">
    <property type="entry name" value="Histone_H2A/H2B/H3"/>
</dbReference>
<dbReference type="InterPro" id="IPR032454">
    <property type="entry name" value="Histone_H2A_C"/>
</dbReference>
<dbReference type="PANTHER" id="PTHR23430">
    <property type="entry name" value="HISTONE H2A"/>
    <property type="match status" value="1"/>
</dbReference>
<dbReference type="Pfam" id="PF00125">
    <property type="entry name" value="Histone"/>
    <property type="match status" value="1"/>
</dbReference>
<dbReference type="Pfam" id="PF16211">
    <property type="entry name" value="Histone_H2A_C"/>
    <property type="match status" value="1"/>
</dbReference>
<dbReference type="PRINTS" id="PR00620">
    <property type="entry name" value="HISTONEH2A"/>
</dbReference>
<dbReference type="SMART" id="SM00414">
    <property type="entry name" value="H2A"/>
    <property type="match status" value="1"/>
</dbReference>
<dbReference type="SUPFAM" id="SSF47113">
    <property type="entry name" value="Histone-fold"/>
    <property type="match status" value="1"/>
</dbReference>
<comment type="function">
    <text evidence="1">Variant histones H2A are synthesized throughout the cell cycle and are very different from classical S-phase regulated H2A. May replace conventional H2A in a subset of nucleosomes. Nucleosomes wrap and compact DNA into chromatin, limiting DNA accessibility to the cellular machineries which require DNA as a template. Histones thereby play a central role in transcription regulation, DNA repair, DNA replication and chromosomal stability. DNA accessibility is regulated via a complex set of post-translational modifications of histones, also called histone code, and nucleosome remodeling (By similarity).</text>
</comment>
<comment type="subunit">
    <text>The nucleosome is a histone octamer containing two molecules each of H2A, H2B, H3 and H4 assembled in one H3-H4 heterotetramer and two H2A-H2B heterodimers. The octamer wraps approximately 147 bp of DNA.</text>
</comment>
<comment type="subcellular location">
    <subcellularLocation>
        <location evidence="1">Nucleus</location>
    </subcellularLocation>
    <subcellularLocation>
        <location evidence="1">Chromosome</location>
    </subcellularLocation>
</comment>
<comment type="similarity">
    <text evidence="3">Belongs to the histone H2A family.</text>
</comment>
<keyword id="KW-0158">Chromosome</keyword>
<keyword id="KW-0238">DNA-binding</keyword>
<keyword id="KW-0544">Nucleosome core</keyword>
<keyword id="KW-0539">Nucleus</keyword>
<keyword id="KW-1185">Reference proteome</keyword>
<evidence type="ECO:0000250" key="1"/>
<evidence type="ECO:0000256" key="2">
    <source>
        <dbReference type="SAM" id="MobiDB-lite"/>
    </source>
</evidence>
<evidence type="ECO:0000305" key="3"/>
<evidence type="ECO:0000312" key="4">
    <source>
        <dbReference type="EMBL" id="EAZ16090.1"/>
    </source>
</evidence>
<name>H2AV2_ORYSJ</name>
<feature type="chain" id="PRO_0000055316" description="Probable histone H2A variant 2">
    <location>
        <begin position="1"/>
        <end position="139"/>
    </location>
</feature>
<feature type="region of interest" description="Disordered" evidence="2">
    <location>
        <begin position="1"/>
        <end position="40"/>
    </location>
</feature>
<feature type="compositionally biased region" description="Low complexity" evidence="2">
    <location>
        <begin position="9"/>
        <end position="19"/>
    </location>
</feature>
<feature type="compositionally biased region" description="Basic and acidic residues" evidence="2">
    <location>
        <begin position="20"/>
        <end position="29"/>
    </location>
</feature>
<feature type="sequence conflict" description="In Ref. 1; AAF07182." evidence="3" ref="1">
    <original>VSR</original>
    <variation>LSP</variation>
    <location>
        <begin position="32"/>
        <end position="34"/>
    </location>
</feature>
<feature type="sequence conflict" description="In Ref. 1; AAF07182." evidence="3" ref="1">
    <original>R</original>
    <variation>P</variation>
    <location>
        <position position="60"/>
    </location>
</feature>
<feature type="sequence conflict" description="In Ref. 1; AAF07182." evidence="3" ref="1">
    <original>A</original>
    <variation>G</variation>
    <location>
        <position position="78"/>
    </location>
</feature>
<proteinExistence type="evidence at transcript level"/>
<protein>
    <recommendedName>
        <fullName>Probable histone H2A variant 2</fullName>
    </recommendedName>
</protein>
<reference key="1">
    <citation type="submission" date="1999-10" db="EMBL/GenBank/DDBJ databases">
        <title>Cloning of rice early embryogenesis related gene H2A by using differential display.</title>
        <authorList>
            <person name="Liao R.M."/>
            <person name="Tseng T.H."/>
            <person name="Chen L.J."/>
            <person name="Wang C.S."/>
        </authorList>
    </citation>
    <scope>NUCLEOTIDE SEQUENCE [MRNA]</scope>
    <source>
        <strain>cv. Tainung 67</strain>
        <tissue>Immature seed</tissue>
    </source>
</reference>
<reference key="2">
    <citation type="journal article" date="2003" name="Science">
        <title>In-depth view of structure, activity, and evolution of rice chromosome 10.</title>
        <authorList>
            <person name="Yu Y."/>
            <person name="Rambo T."/>
            <person name="Currie J."/>
            <person name="Saski C."/>
            <person name="Kim H.-R."/>
            <person name="Collura K."/>
            <person name="Thompson S."/>
            <person name="Simmons J."/>
            <person name="Yang T.-J."/>
            <person name="Nah G."/>
            <person name="Patel A.J."/>
            <person name="Thurmond S."/>
            <person name="Henry D."/>
            <person name="Oates R."/>
            <person name="Palmer M."/>
            <person name="Pries G."/>
            <person name="Gibson J."/>
            <person name="Anderson H."/>
            <person name="Paradkar M."/>
            <person name="Crane L."/>
            <person name="Dale J."/>
            <person name="Carver M.B."/>
            <person name="Wood T."/>
            <person name="Frisch D."/>
            <person name="Engler F."/>
            <person name="Soderlund C."/>
            <person name="Palmer L.E."/>
            <person name="Teytelman L."/>
            <person name="Nascimento L."/>
            <person name="De la Bastide M."/>
            <person name="Spiegel L."/>
            <person name="Ware D."/>
            <person name="O'Shaughnessy A."/>
            <person name="Dike S."/>
            <person name="Dedhia N."/>
            <person name="Preston R."/>
            <person name="Huang E."/>
            <person name="Ferraro K."/>
            <person name="Kuit K."/>
            <person name="Miller B."/>
            <person name="Zutavern T."/>
            <person name="Katzenberger F."/>
            <person name="Muller S."/>
            <person name="Balija V."/>
            <person name="Martienssen R.A."/>
            <person name="Stein L."/>
            <person name="Minx P."/>
            <person name="Johnson D."/>
            <person name="Cordum H."/>
            <person name="Mardis E."/>
            <person name="Cheng Z."/>
            <person name="Jiang J."/>
            <person name="Wilson R."/>
            <person name="McCombie W.R."/>
            <person name="Wing R.A."/>
            <person name="Yuan Q."/>
            <person name="Ouyang S."/>
            <person name="Liu J."/>
            <person name="Jones K.M."/>
            <person name="Gansberger K."/>
            <person name="Moffat K."/>
            <person name="Hill J."/>
            <person name="Tsitrin T."/>
            <person name="Overton L."/>
            <person name="Bera J."/>
            <person name="Kim M."/>
            <person name="Jin S."/>
            <person name="Tallon L."/>
            <person name="Ciecko A."/>
            <person name="Pai G."/>
            <person name="Van Aken S."/>
            <person name="Utterback T."/>
            <person name="Reidmuller S."/>
            <person name="Bormann J."/>
            <person name="Feldblyum T."/>
            <person name="Hsiao J."/>
            <person name="Zismann V."/>
            <person name="Blunt S."/>
            <person name="de Vazeille A.R."/>
            <person name="Shaffer T."/>
            <person name="Koo H."/>
            <person name="Suh B."/>
            <person name="Yang Q."/>
            <person name="Haas B."/>
            <person name="Peterson J."/>
            <person name="Pertea M."/>
            <person name="Volfovsky N."/>
            <person name="Wortman J."/>
            <person name="White O."/>
            <person name="Salzberg S.L."/>
            <person name="Fraser C.M."/>
            <person name="Buell C.R."/>
            <person name="Messing J."/>
            <person name="Song R."/>
            <person name="Fuks G."/>
            <person name="Llaca V."/>
            <person name="Kovchak S."/>
            <person name="Young S."/>
            <person name="Bowers J.E."/>
            <person name="Paterson A.H."/>
            <person name="Johns M.A."/>
            <person name="Mao L."/>
            <person name="Pan H."/>
            <person name="Dean R.A."/>
        </authorList>
    </citation>
    <scope>NUCLEOTIDE SEQUENCE [LARGE SCALE GENOMIC DNA]</scope>
    <source>
        <strain>cv. Nipponbare</strain>
    </source>
</reference>
<reference key="3">
    <citation type="journal article" date="2005" name="Nature">
        <title>The map-based sequence of the rice genome.</title>
        <authorList>
            <consortium name="International rice genome sequencing project (IRGSP)"/>
        </authorList>
    </citation>
    <scope>NUCLEOTIDE SEQUENCE [LARGE SCALE GENOMIC DNA]</scope>
    <source>
        <strain>cv. Nipponbare</strain>
    </source>
</reference>
<reference key="4">
    <citation type="journal article" date="2008" name="Nucleic Acids Res.">
        <title>The rice annotation project database (RAP-DB): 2008 update.</title>
        <authorList>
            <consortium name="The rice annotation project (RAP)"/>
        </authorList>
    </citation>
    <scope>GENOME REANNOTATION</scope>
    <source>
        <strain>cv. Nipponbare</strain>
    </source>
</reference>
<reference key="5">
    <citation type="journal article" date="2013" name="Rice">
        <title>Improvement of the Oryza sativa Nipponbare reference genome using next generation sequence and optical map data.</title>
        <authorList>
            <person name="Kawahara Y."/>
            <person name="de la Bastide M."/>
            <person name="Hamilton J.P."/>
            <person name="Kanamori H."/>
            <person name="McCombie W.R."/>
            <person name="Ouyang S."/>
            <person name="Schwartz D.C."/>
            <person name="Tanaka T."/>
            <person name="Wu J."/>
            <person name="Zhou S."/>
            <person name="Childs K.L."/>
            <person name="Davidson R.M."/>
            <person name="Lin H."/>
            <person name="Quesada-Ocampo L."/>
            <person name="Vaillancourt B."/>
            <person name="Sakai H."/>
            <person name="Lee S.S."/>
            <person name="Kim J."/>
            <person name="Numa H."/>
            <person name="Itoh T."/>
            <person name="Buell C.R."/>
            <person name="Matsumoto T."/>
        </authorList>
    </citation>
    <scope>GENOME REANNOTATION</scope>
    <source>
        <strain>cv. Nipponbare</strain>
    </source>
</reference>
<reference key="6">
    <citation type="journal article" date="2005" name="PLoS Biol.">
        <title>The genomes of Oryza sativa: a history of duplications.</title>
        <authorList>
            <person name="Yu J."/>
            <person name="Wang J."/>
            <person name="Lin W."/>
            <person name="Li S."/>
            <person name="Li H."/>
            <person name="Zhou J."/>
            <person name="Ni P."/>
            <person name="Dong W."/>
            <person name="Hu S."/>
            <person name="Zeng C."/>
            <person name="Zhang J."/>
            <person name="Zhang Y."/>
            <person name="Li R."/>
            <person name="Xu Z."/>
            <person name="Li S."/>
            <person name="Li X."/>
            <person name="Zheng H."/>
            <person name="Cong L."/>
            <person name="Lin L."/>
            <person name="Yin J."/>
            <person name="Geng J."/>
            <person name="Li G."/>
            <person name="Shi J."/>
            <person name="Liu J."/>
            <person name="Lv H."/>
            <person name="Li J."/>
            <person name="Wang J."/>
            <person name="Deng Y."/>
            <person name="Ran L."/>
            <person name="Shi X."/>
            <person name="Wang X."/>
            <person name="Wu Q."/>
            <person name="Li C."/>
            <person name="Ren X."/>
            <person name="Wang J."/>
            <person name="Wang X."/>
            <person name="Li D."/>
            <person name="Liu D."/>
            <person name="Zhang X."/>
            <person name="Ji Z."/>
            <person name="Zhao W."/>
            <person name="Sun Y."/>
            <person name="Zhang Z."/>
            <person name="Bao J."/>
            <person name="Han Y."/>
            <person name="Dong L."/>
            <person name="Ji J."/>
            <person name="Chen P."/>
            <person name="Wu S."/>
            <person name="Liu J."/>
            <person name="Xiao Y."/>
            <person name="Bu D."/>
            <person name="Tan J."/>
            <person name="Yang L."/>
            <person name="Ye C."/>
            <person name="Zhang J."/>
            <person name="Xu J."/>
            <person name="Zhou Y."/>
            <person name="Yu Y."/>
            <person name="Zhang B."/>
            <person name="Zhuang S."/>
            <person name="Wei H."/>
            <person name="Liu B."/>
            <person name="Lei M."/>
            <person name="Yu H."/>
            <person name="Li Y."/>
            <person name="Xu H."/>
            <person name="Wei S."/>
            <person name="He X."/>
            <person name="Fang L."/>
            <person name="Zhang Z."/>
            <person name="Zhang Y."/>
            <person name="Huang X."/>
            <person name="Su Z."/>
            <person name="Tong W."/>
            <person name="Li J."/>
            <person name="Tong Z."/>
            <person name="Li S."/>
            <person name="Ye J."/>
            <person name="Wang L."/>
            <person name="Fang L."/>
            <person name="Lei T."/>
            <person name="Chen C.-S."/>
            <person name="Chen H.-C."/>
            <person name="Xu Z."/>
            <person name="Li H."/>
            <person name="Huang H."/>
            <person name="Zhang F."/>
            <person name="Xu H."/>
            <person name="Li N."/>
            <person name="Zhao C."/>
            <person name="Li S."/>
            <person name="Dong L."/>
            <person name="Huang Y."/>
            <person name="Li L."/>
            <person name="Xi Y."/>
            <person name="Qi Q."/>
            <person name="Li W."/>
            <person name="Zhang B."/>
            <person name="Hu W."/>
            <person name="Zhang Y."/>
            <person name="Tian X."/>
            <person name="Jiao Y."/>
            <person name="Liang X."/>
            <person name="Jin J."/>
            <person name="Gao L."/>
            <person name="Zheng W."/>
            <person name="Hao B."/>
            <person name="Liu S.-M."/>
            <person name="Wang W."/>
            <person name="Yuan L."/>
            <person name="Cao M."/>
            <person name="McDermott J."/>
            <person name="Samudrala R."/>
            <person name="Wang J."/>
            <person name="Wong G.K.-S."/>
            <person name="Yang H."/>
        </authorList>
    </citation>
    <scope>NUCLEOTIDE SEQUENCE [LARGE SCALE GENOMIC DNA]</scope>
    <source>
        <strain>cv. Nipponbare</strain>
    </source>
</reference>
<reference key="7">
    <citation type="journal article" date="2003" name="Science">
        <title>Collection, mapping, and annotation of over 28,000 cDNA clones from japonica rice.</title>
        <authorList>
            <consortium name="The rice full-length cDNA consortium"/>
        </authorList>
    </citation>
    <scope>NUCLEOTIDE SEQUENCE [LARGE SCALE MRNA]</scope>
    <source>
        <strain>cv. Nipponbare</strain>
    </source>
</reference>
<accession>Q8S857</accession>
<accession>A3C4S7</accession>
<accession>Q0IXP0</accession>
<accession>Q7XEK5</accession>
<accession>Q9SNZ3</accession>
<sequence length="139" mass="14612">MAGKGGKGLLAAKTTAAKAAADKDKDRKKAPVSRSSRAGIQFPVGRIHRQLKGRVSANGRVGATAAVYTAAILEYLTAEVLELAGNASKDLKVKRITPRHLQLAIRGDEELDTLIKGTIAGGGVIPHIHKSLINKTAKE</sequence>